<protein>
    <recommendedName>
        <fullName evidence="1">Undecaprenyl-diphosphatase</fullName>
        <ecNumber evidence="1">3.6.1.27</ecNumber>
    </recommendedName>
    <alternativeName>
        <fullName evidence="1">Bacitracin resistance protein</fullName>
    </alternativeName>
    <alternativeName>
        <fullName evidence="1">Undecaprenyl pyrophosphate phosphatase</fullName>
    </alternativeName>
</protein>
<reference key="1">
    <citation type="journal article" date="2004" name="Nat. Genet.">
        <title>Comparison of genome degradation in Paratyphi A and Typhi, human-restricted serovars of Salmonella enterica that cause typhoid.</title>
        <authorList>
            <person name="McClelland M."/>
            <person name="Sanderson K.E."/>
            <person name="Clifton S.W."/>
            <person name="Latreille P."/>
            <person name="Porwollik S."/>
            <person name="Sabo A."/>
            <person name="Meyer R."/>
            <person name="Bieri T."/>
            <person name="Ozersky P."/>
            <person name="McLellan M."/>
            <person name="Harkins C.R."/>
            <person name="Wang C."/>
            <person name="Nguyen C."/>
            <person name="Berghoff A."/>
            <person name="Elliott G."/>
            <person name="Kohlberg S."/>
            <person name="Strong C."/>
            <person name="Du F."/>
            <person name="Carter J."/>
            <person name="Kremizki C."/>
            <person name="Layman D."/>
            <person name="Leonard S."/>
            <person name="Sun H."/>
            <person name="Fulton L."/>
            <person name="Nash W."/>
            <person name="Miner T."/>
            <person name="Minx P."/>
            <person name="Delehaunty K."/>
            <person name="Fronick C."/>
            <person name="Magrini V."/>
            <person name="Nhan M."/>
            <person name="Warren W."/>
            <person name="Florea L."/>
            <person name="Spieth J."/>
            <person name="Wilson R.K."/>
        </authorList>
    </citation>
    <scope>NUCLEOTIDE SEQUENCE [LARGE SCALE GENOMIC DNA]</scope>
    <source>
        <strain>ATCC 9150 / SARB42</strain>
    </source>
</reference>
<evidence type="ECO:0000255" key="1">
    <source>
        <dbReference type="HAMAP-Rule" id="MF_01006"/>
    </source>
</evidence>
<feature type="chain" id="PRO_0000151191" description="Undecaprenyl-diphosphatase">
    <location>
        <begin position="1"/>
        <end position="273"/>
    </location>
</feature>
<feature type="transmembrane region" description="Helical" evidence="1">
    <location>
        <begin position="54"/>
        <end position="74"/>
    </location>
</feature>
<feature type="transmembrane region" description="Helical" evidence="1">
    <location>
        <begin position="90"/>
        <end position="110"/>
    </location>
</feature>
<feature type="transmembrane region" description="Helical" evidence="1">
    <location>
        <begin position="116"/>
        <end position="136"/>
    </location>
</feature>
<feature type="transmembrane region" description="Helical" evidence="1">
    <location>
        <begin position="156"/>
        <end position="178"/>
    </location>
</feature>
<feature type="transmembrane region" description="Helical" evidence="1">
    <location>
        <begin position="190"/>
        <end position="210"/>
    </location>
</feature>
<feature type="transmembrane region" description="Helical" evidence="1">
    <location>
        <begin position="222"/>
        <end position="242"/>
    </location>
</feature>
<feature type="transmembrane region" description="Helical" evidence="1">
    <location>
        <begin position="252"/>
        <end position="272"/>
    </location>
</feature>
<proteinExistence type="inferred from homology"/>
<sequence>MSDMHSLLIAAILGVVEGLTEFLPVSSTGHMIIVGHLLGFEGDTAKTFEVVIQLGSILAVVVMFWRQLFGLIGIHFGRPLQREGESKGRLTLIHILLGMIPAVVLGLVFHDTIKSLFNPINVMYALVVGGLLLIAAECLKPKEPRAPGLDDMTYRQAFMIGCFQCLALWPGFSRSGATISGGMLMGVSRYAASEFSFLLAVPMMMGATVLDLYKSWSFLTAADIPMFAVGFVTAFVVALIAIKTFLQLIKRISFIPFAIYRFVVAAAVYVVFF</sequence>
<name>UPPP_SALPA</name>
<organism>
    <name type="scientific">Salmonella paratyphi A (strain ATCC 9150 / SARB42)</name>
    <dbReference type="NCBI Taxonomy" id="295319"/>
    <lineage>
        <taxon>Bacteria</taxon>
        <taxon>Pseudomonadati</taxon>
        <taxon>Pseudomonadota</taxon>
        <taxon>Gammaproteobacteria</taxon>
        <taxon>Enterobacterales</taxon>
        <taxon>Enterobacteriaceae</taxon>
        <taxon>Salmonella</taxon>
    </lineage>
</organism>
<keyword id="KW-0046">Antibiotic resistance</keyword>
<keyword id="KW-0997">Cell inner membrane</keyword>
<keyword id="KW-1003">Cell membrane</keyword>
<keyword id="KW-0133">Cell shape</keyword>
<keyword id="KW-0961">Cell wall biogenesis/degradation</keyword>
<keyword id="KW-0378">Hydrolase</keyword>
<keyword id="KW-0472">Membrane</keyword>
<keyword id="KW-0573">Peptidoglycan synthesis</keyword>
<keyword id="KW-0812">Transmembrane</keyword>
<keyword id="KW-1133">Transmembrane helix</keyword>
<accession>Q5PC81</accession>
<comment type="function">
    <text evidence="1">Catalyzes the dephosphorylation of undecaprenyl diphosphate (UPP). Confers resistance to bacitracin.</text>
</comment>
<comment type="catalytic activity">
    <reaction evidence="1">
        <text>di-trans,octa-cis-undecaprenyl diphosphate + H2O = di-trans,octa-cis-undecaprenyl phosphate + phosphate + H(+)</text>
        <dbReference type="Rhea" id="RHEA:28094"/>
        <dbReference type="ChEBI" id="CHEBI:15377"/>
        <dbReference type="ChEBI" id="CHEBI:15378"/>
        <dbReference type="ChEBI" id="CHEBI:43474"/>
        <dbReference type="ChEBI" id="CHEBI:58405"/>
        <dbReference type="ChEBI" id="CHEBI:60392"/>
        <dbReference type="EC" id="3.6.1.27"/>
    </reaction>
</comment>
<comment type="subcellular location">
    <subcellularLocation>
        <location evidence="1">Cell inner membrane</location>
        <topology evidence="1">Multi-pass membrane protein</topology>
    </subcellularLocation>
</comment>
<comment type="miscellaneous">
    <text>Bacitracin is thought to be involved in the inhibition of peptidoglycan synthesis by sequestering undecaprenyl diphosphate, thereby reducing the pool of lipid carrier available.</text>
</comment>
<comment type="similarity">
    <text evidence="1">Belongs to the UppP family.</text>
</comment>
<dbReference type="EC" id="3.6.1.27" evidence="1"/>
<dbReference type="EMBL" id="CP000026">
    <property type="protein sequence ID" value="AAV78908.1"/>
    <property type="molecule type" value="Genomic_DNA"/>
</dbReference>
<dbReference type="RefSeq" id="WP_001281926.1">
    <property type="nucleotide sequence ID" value="NC_006511.1"/>
</dbReference>
<dbReference type="SMR" id="Q5PC81"/>
<dbReference type="KEGG" id="spt:SPA3073"/>
<dbReference type="HOGENOM" id="CLU_060296_2_0_6"/>
<dbReference type="Proteomes" id="UP000008185">
    <property type="component" value="Chromosome"/>
</dbReference>
<dbReference type="GO" id="GO:0005886">
    <property type="term" value="C:plasma membrane"/>
    <property type="evidence" value="ECO:0007669"/>
    <property type="project" value="UniProtKB-SubCell"/>
</dbReference>
<dbReference type="GO" id="GO:0050380">
    <property type="term" value="F:undecaprenyl-diphosphatase activity"/>
    <property type="evidence" value="ECO:0007669"/>
    <property type="project" value="UniProtKB-UniRule"/>
</dbReference>
<dbReference type="GO" id="GO:0071555">
    <property type="term" value="P:cell wall organization"/>
    <property type="evidence" value="ECO:0007669"/>
    <property type="project" value="UniProtKB-KW"/>
</dbReference>
<dbReference type="GO" id="GO:0009252">
    <property type="term" value="P:peptidoglycan biosynthetic process"/>
    <property type="evidence" value="ECO:0007669"/>
    <property type="project" value="UniProtKB-KW"/>
</dbReference>
<dbReference type="GO" id="GO:0008360">
    <property type="term" value="P:regulation of cell shape"/>
    <property type="evidence" value="ECO:0007669"/>
    <property type="project" value="UniProtKB-KW"/>
</dbReference>
<dbReference type="GO" id="GO:0046677">
    <property type="term" value="P:response to antibiotic"/>
    <property type="evidence" value="ECO:0007669"/>
    <property type="project" value="UniProtKB-UniRule"/>
</dbReference>
<dbReference type="HAMAP" id="MF_01006">
    <property type="entry name" value="Undec_diphosphatase"/>
    <property type="match status" value="1"/>
</dbReference>
<dbReference type="InterPro" id="IPR003824">
    <property type="entry name" value="UppP"/>
</dbReference>
<dbReference type="NCBIfam" id="NF001388">
    <property type="entry name" value="PRK00281.1-1"/>
    <property type="match status" value="1"/>
</dbReference>
<dbReference type="NCBIfam" id="NF001389">
    <property type="entry name" value="PRK00281.1-2"/>
    <property type="match status" value="1"/>
</dbReference>
<dbReference type="NCBIfam" id="NF001390">
    <property type="entry name" value="PRK00281.1-4"/>
    <property type="match status" value="1"/>
</dbReference>
<dbReference type="NCBIfam" id="TIGR00753">
    <property type="entry name" value="undec_PP_bacA"/>
    <property type="match status" value="1"/>
</dbReference>
<dbReference type="PANTHER" id="PTHR30622">
    <property type="entry name" value="UNDECAPRENYL-DIPHOSPHATASE"/>
    <property type="match status" value="1"/>
</dbReference>
<dbReference type="PANTHER" id="PTHR30622:SF3">
    <property type="entry name" value="UNDECAPRENYL-DIPHOSPHATASE"/>
    <property type="match status" value="1"/>
</dbReference>
<dbReference type="Pfam" id="PF02673">
    <property type="entry name" value="BacA"/>
    <property type="match status" value="1"/>
</dbReference>
<gene>
    <name evidence="1" type="primary">uppP</name>
    <name type="synonym">bacA</name>
    <name type="ordered locus">SPA3073</name>
</gene>